<dbReference type="EC" id="2.1.1.228"/>
<dbReference type="EMBL" id="AE001439">
    <property type="protein sequence ID" value="AAD06655.1"/>
    <property type="molecule type" value="Genomic_DNA"/>
</dbReference>
<dbReference type="PIR" id="H71851">
    <property type="entry name" value="H71851"/>
</dbReference>
<dbReference type="RefSeq" id="WP_000672896.1">
    <property type="nucleotide sequence ID" value="NC_000921.1"/>
</dbReference>
<dbReference type="SMR" id="Q9ZK66"/>
<dbReference type="KEGG" id="hpj:jhp_1075"/>
<dbReference type="PATRIC" id="fig|85963.30.peg.1508"/>
<dbReference type="eggNOG" id="COG0336">
    <property type="taxonomic scope" value="Bacteria"/>
</dbReference>
<dbReference type="Proteomes" id="UP000000804">
    <property type="component" value="Chromosome"/>
</dbReference>
<dbReference type="GO" id="GO:0005829">
    <property type="term" value="C:cytosol"/>
    <property type="evidence" value="ECO:0007669"/>
    <property type="project" value="TreeGrafter"/>
</dbReference>
<dbReference type="GO" id="GO:0052906">
    <property type="term" value="F:tRNA (guanine(37)-N1)-methyltransferase activity"/>
    <property type="evidence" value="ECO:0007669"/>
    <property type="project" value="UniProtKB-UniRule"/>
</dbReference>
<dbReference type="GO" id="GO:0002939">
    <property type="term" value="P:tRNA N1-guanine methylation"/>
    <property type="evidence" value="ECO:0007669"/>
    <property type="project" value="TreeGrafter"/>
</dbReference>
<dbReference type="CDD" id="cd18080">
    <property type="entry name" value="TrmD-like"/>
    <property type="match status" value="1"/>
</dbReference>
<dbReference type="FunFam" id="1.10.1270.20:FF:000005">
    <property type="entry name" value="tRNA (guanine-N(1)-)-methyltransferase"/>
    <property type="match status" value="1"/>
</dbReference>
<dbReference type="Gene3D" id="3.40.1280.10">
    <property type="match status" value="1"/>
</dbReference>
<dbReference type="Gene3D" id="1.10.1270.20">
    <property type="entry name" value="tRNA(m1g37)methyltransferase, domain 2"/>
    <property type="match status" value="1"/>
</dbReference>
<dbReference type="HAMAP" id="MF_00605">
    <property type="entry name" value="TrmD"/>
    <property type="match status" value="1"/>
</dbReference>
<dbReference type="InterPro" id="IPR029028">
    <property type="entry name" value="Alpha/beta_knot_MTases"/>
</dbReference>
<dbReference type="InterPro" id="IPR023148">
    <property type="entry name" value="tRNA_m1G_MeTrfase_C_sf"/>
</dbReference>
<dbReference type="InterPro" id="IPR002649">
    <property type="entry name" value="tRNA_m1G_MeTrfase_TrmD"/>
</dbReference>
<dbReference type="InterPro" id="IPR029026">
    <property type="entry name" value="tRNA_m1G_MTases_N"/>
</dbReference>
<dbReference type="InterPro" id="IPR016009">
    <property type="entry name" value="tRNA_MeTrfase_TRMD/TRM10"/>
</dbReference>
<dbReference type="NCBIfam" id="NF000648">
    <property type="entry name" value="PRK00026.1"/>
    <property type="match status" value="1"/>
</dbReference>
<dbReference type="NCBIfam" id="TIGR00088">
    <property type="entry name" value="trmD"/>
    <property type="match status" value="1"/>
</dbReference>
<dbReference type="PANTHER" id="PTHR46417">
    <property type="entry name" value="TRNA (GUANINE-N(1)-)-METHYLTRANSFERASE"/>
    <property type="match status" value="1"/>
</dbReference>
<dbReference type="PANTHER" id="PTHR46417:SF1">
    <property type="entry name" value="TRNA (GUANINE-N(1)-)-METHYLTRANSFERASE"/>
    <property type="match status" value="1"/>
</dbReference>
<dbReference type="Pfam" id="PF01746">
    <property type="entry name" value="tRNA_m1G_MT"/>
    <property type="match status" value="1"/>
</dbReference>
<dbReference type="PIRSF" id="PIRSF000386">
    <property type="entry name" value="tRNA_mtase"/>
    <property type="match status" value="1"/>
</dbReference>
<dbReference type="SUPFAM" id="SSF75217">
    <property type="entry name" value="alpha/beta knot"/>
    <property type="match status" value="1"/>
</dbReference>
<comment type="function">
    <text evidence="1">Specifically methylates guanosine-37 in various tRNAs.</text>
</comment>
<comment type="catalytic activity">
    <reaction>
        <text>guanosine(37) in tRNA + S-adenosyl-L-methionine = N(1)-methylguanosine(37) in tRNA + S-adenosyl-L-homocysteine + H(+)</text>
        <dbReference type="Rhea" id="RHEA:36899"/>
        <dbReference type="Rhea" id="RHEA-COMP:10145"/>
        <dbReference type="Rhea" id="RHEA-COMP:10147"/>
        <dbReference type="ChEBI" id="CHEBI:15378"/>
        <dbReference type="ChEBI" id="CHEBI:57856"/>
        <dbReference type="ChEBI" id="CHEBI:59789"/>
        <dbReference type="ChEBI" id="CHEBI:73542"/>
        <dbReference type="ChEBI" id="CHEBI:74269"/>
        <dbReference type="EC" id="2.1.1.228"/>
    </reaction>
</comment>
<comment type="subunit">
    <text evidence="1">Homodimer.</text>
</comment>
<comment type="subcellular location">
    <subcellularLocation>
        <location evidence="2">Cytoplasm</location>
    </subcellularLocation>
</comment>
<comment type="similarity">
    <text evidence="2">Belongs to the RNA methyltransferase TrmD family.</text>
</comment>
<gene>
    <name type="primary">trmD</name>
    <name type="ordered locus">jhp_1075</name>
</gene>
<accession>Q9ZK66</accession>
<proteinExistence type="inferred from homology"/>
<sequence length="229" mass="25853">MKFSVLTLFPQLILPYFEDSILKRALEKNLFELEVLNLRDFSANKYQKADHTLIGGGAGQILDPEMIENALHSVKNPKHTIFLSAVGKPFKQIDAMRLAQKKHVVLVCGRYEGFDERSIELGADEVFCIGDFILTGGELGALCLIDSIARHIQGVLGNAQSLENESFENNYLETPNFANAVFKSKEINKIPAPLEYSKGNHAKIKQLKLDLSKLRTKFYRLDLFKQHKS</sequence>
<protein>
    <recommendedName>
        <fullName>tRNA (guanine-N(1)-)-methyltransferase</fullName>
        <ecNumber>2.1.1.228</ecNumber>
    </recommendedName>
    <alternativeName>
        <fullName>M1G-methyltransferase</fullName>
    </alternativeName>
    <alternativeName>
        <fullName>tRNA [GM37] methyltransferase</fullName>
    </alternativeName>
</protein>
<feature type="chain" id="PRO_0000060389" description="tRNA (guanine-N(1)-)-methyltransferase">
    <location>
        <begin position="1"/>
        <end position="229"/>
    </location>
</feature>
<feature type="binding site" evidence="1">
    <location>
        <position position="109"/>
    </location>
    <ligand>
        <name>S-adenosyl-L-methionine</name>
        <dbReference type="ChEBI" id="CHEBI:59789"/>
    </ligand>
</feature>
<feature type="binding site" evidence="1">
    <location>
        <begin position="129"/>
        <end position="134"/>
    </location>
    <ligand>
        <name>S-adenosyl-L-methionine</name>
        <dbReference type="ChEBI" id="CHEBI:59789"/>
    </ligand>
</feature>
<organism>
    <name type="scientific">Helicobacter pylori (strain J99 / ATCC 700824)</name>
    <name type="common">Campylobacter pylori J99</name>
    <dbReference type="NCBI Taxonomy" id="85963"/>
    <lineage>
        <taxon>Bacteria</taxon>
        <taxon>Pseudomonadati</taxon>
        <taxon>Campylobacterota</taxon>
        <taxon>Epsilonproteobacteria</taxon>
        <taxon>Campylobacterales</taxon>
        <taxon>Helicobacteraceae</taxon>
        <taxon>Helicobacter</taxon>
    </lineage>
</organism>
<name>TRMD_HELPJ</name>
<reference key="1">
    <citation type="journal article" date="1999" name="Nature">
        <title>Genomic sequence comparison of two unrelated isolates of the human gastric pathogen Helicobacter pylori.</title>
        <authorList>
            <person name="Alm R.A."/>
            <person name="Ling L.-S.L."/>
            <person name="Moir D.T."/>
            <person name="King B.L."/>
            <person name="Brown E.D."/>
            <person name="Doig P.C."/>
            <person name="Smith D.R."/>
            <person name="Noonan B."/>
            <person name="Guild B.C."/>
            <person name="deJonge B.L."/>
            <person name="Carmel G."/>
            <person name="Tummino P.J."/>
            <person name="Caruso A."/>
            <person name="Uria-Nickelsen M."/>
            <person name="Mills D.M."/>
            <person name="Ives C."/>
            <person name="Gibson R."/>
            <person name="Merberg D."/>
            <person name="Mills S.D."/>
            <person name="Jiang Q."/>
            <person name="Taylor D.E."/>
            <person name="Vovis G.F."/>
            <person name="Trust T.J."/>
        </authorList>
    </citation>
    <scope>NUCLEOTIDE SEQUENCE [LARGE SCALE GENOMIC DNA]</scope>
    <source>
        <strain>J99 / ATCC 700824</strain>
    </source>
</reference>
<keyword id="KW-0963">Cytoplasm</keyword>
<keyword id="KW-0489">Methyltransferase</keyword>
<keyword id="KW-0949">S-adenosyl-L-methionine</keyword>
<keyword id="KW-0808">Transferase</keyword>
<keyword id="KW-0819">tRNA processing</keyword>
<evidence type="ECO:0000250" key="1"/>
<evidence type="ECO:0000305" key="2"/>